<feature type="chain" id="PRO_0000444706" description="Ethylene-responsive transcription factor ERN1">
    <location>
        <begin position="1"/>
        <end position="269"/>
    </location>
</feature>
<feature type="DNA-binding region" description="AP2/ERF" evidence="1">
    <location>
        <begin position="34"/>
        <end position="91"/>
    </location>
</feature>
<feature type="region of interest" description="Disordered" evidence="2">
    <location>
        <begin position="1"/>
        <end position="36"/>
    </location>
</feature>
<feature type="region of interest" description="Disordered" evidence="2">
    <location>
        <begin position="128"/>
        <end position="157"/>
    </location>
</feature>
<feature type="compositionally biased region" description="Polar residues" evidence="2">
    <location>
        <begin position="1"/>
        <end position="15"/>
    </location>
</feature>
<feature type="compositionally biased region" description="Low complexity" evidence="2">
    <location>
        <begin position="128"/>
        <end position="146"/>
    </location>
</feature>
<organism>
    <name type="scientific">Lotus japonicus</name>
    <name type="common">Lotus corniculatus var. japonicus</name>
    <dbReference type="NCBI Taxonomy" id="34305"/>
    <lineage>
        <taxon>Eukaryota</taxon>
        <taxon>Viridiplantae</taxon>
        <taxon>Streptophyta</taxon>
        <taxon>Embryophyta</taxon>
        <taxon>Tracheophyta</taxon>
        <taxon>Spermatophyta</taxon>
        <taxon>Magnoliopsida</taxon>
        <taxon>eudicotyledons</taxon>
        <taxon>Gunneridae</taxon>
        <taxon>Pentapetalae</taxon>
        <taxon>rosids</taxon>
        <taxon>fabids</taxon>
        <taxon>Fabales</taxon>
        <taxon>Fabaceae</taxon>
        <taxon>Papilionoideae</taxon>
        <taxon>50 kb inversion clade</taxon>
        <taxon>NPAAA clade</taxon>
        <taxon>Hologalegina</taxon>
        <taxon>robinioid clade</taxon>
        <taxon>Loteae</taxon>
        <taxon>Lotus</taxon>
    </lineage>
</organism>
<accession>A0A1X9PY88</accession>
<dbReference type="EMBL" id="KX858808">
    <property type="protein sequence ID" value="ARQ14732.1"/>
    <property type="molecule type" value="mRNA"/>
</dbReference>
<dbReference type="SMR" id="A0A1X9PY88"/>
<dbReference type="OMA" id="DYMESVH"/>
<dbReference type="OrthoDB" id="773121at2759"/>
<dbReference type="GO" id="GO:0005634">
    <property type="term" value="C:nucleus"/>
    <property type="evidence" value="ECO:0007669"/>
    <property type="project" value="UniProtKB-SubCell"/>
</dbReference>
<dbReference type="GO" id="GO:0003677">
    <property type="term" value="F:DNA binding"/>
    <property type="evidence" value="ECO:0007669"/>
    <property type="project" value="UniProtKB-KW"/>
</dbReference>
<dbReference type="GO" id="GO:0003700">
    <property type="term" value="F:DNA-binding transcription factor activity"/>
    <property type="evidence" value="ECO:0007669"/>
    <property type="project" value="InterPro"/>
</dbReference>
<dbReference type="GO" id="GO:0009877">
    <property type="term" value="P:nodulation"/>
    <property type="evidence" value="ECO:0000315"/>
    <property type="project" value="UniProtKB"/>
</dbReference>
<dbReference type="GO" id="GO:0006355">
    <property type="term" value="P:regulation of DNA-templated transcription"/>
    <property type="evidence" value="ECO:0000314"/>
    <property type="project" value="UniProtKB"/>
</dbReference>
<dbReference type="CDD" id="cd00018">
    <property type="entry name" value="AP2"/>
    <property type="match status" value="1"/>
</dbReference>
<dbReference type="FunFam" id="3.30.730.10:FF:000005">
    <property type="entry name" value="ethylene-responsive transcription factor RAP2-11"/>
    <property type="match status" value="1"/>
</dbReference>
<dbReference type="Gene3D" id="3.30.730.10">
    <property type="entry name" value="AP2/ERF domain"/>
    <property type="match status" value="1"/>
</dbReference>
<dbReference type="InterPro" id="IPR001471">
    <property type="entry name" value="AP2/ERF_dom"/>
</dbReference>
<dbReference type="InterPro" id="IPR036955">
    <property type="entry name" value="AP2/ERF_dom_sf"/>
</dbReference>
<dbReference type="InterPro" id="IPR050913">
    <property type="entry name" value="AP2/ERF_ERF_subfamily"/>
</dbReference>
<dbReference type="InterPro" id="IPR016177">
    <property type="entry name" value="DNA-bd_dom_sf"/>
</dbReference>
<dbReference type="PANTHER" id="PTHR31194:SF1">
    <property type="entry name" value="ETHYLENE-RESPONSIVE TRANSCRIPTION FACTOR ERN2"/>
    <property type="match status" value="1"/>
</dbReference>
<dbReference type="PANTHER" id="PTHR31194">
    <property type="entry name" value="SHN SHINE , DNA BINDING / TRANSCRIPTION FACTOR"/>
    <property type="match status" value="1"/>
</dbReference>
<dbReference type="Pfam" id="PF00847">
    <property type="entry name" value="AP2"/>
    <property type="match status" value="1"/>
</dbReference>
<dbReference type="PRINTS" id="PR00367">
    <property type="entry name" value="ETHRSPELEMNT"/>
</dbReference>
<dbReference type="SMART" id="SM00380">
    <property type="entry name" value="AP2"/>
    <property type="match status" value="1"/>
</dbReference>
<dbReference type="SUPFAM" id="SSF54171">
    <property type="entry name" value="DNA-binding domain"/>
    <property type="match status" value="1"/>
</dbReference>
<dbReference type="PROSITE" id="PS51032">
    <property type="entry name" value="AP2_ERF"/>
    <property type="match status" value="1"/>
</dbReference>
<name>ERN1_LOTJA</name>
<keyword id="KW-0238">DNA-binding</keyword>
<keyword id="KW-0536">Nodulation</keyword>
<keyword id="KW-0539">Nucleus</keyword>
<keyword id="KW-0804">Transcription</keyword>
<keyword id="KW-0805">Transcription regulation</keyword>
<reference key="1">
    <citation type="journal article" date="2017" name="New Phytol.">
        <title>The ERN1 transcription factor gene is a target of the CCaMK/CYCLOPS complex and controls rhizobial infection in Lotus japonicus.</title>
        <authorList>
            <person name="Cerri M.R."/>
            <person name="Wang Q."/>
            <person name="Stolz P."/>
            <person name="Folgmann J."/>
            <person name="Frances L."/>
            <person name="Katzer K."/>
            <person name="Li X."/>
            <person name="Heckmann A.B."/>
            <person name="Wang T.L."/>
            <person name="Downie J.A."/>
            <person name="Klingl A."/>
            <person name="de Carvalho-Niebel F."/>
            <person name="Xie F."/>
            <person name="Parniske M."/>
        </authorList>
    </citation>
    <scope>NUCLEOTIDE SEQUENCE [MRNA]</scope>
    <scope>FUNCTION</scope>
    <scope>INDUCTION</scope>
    <scope>DISRUPTION PHENOTYPE</scope>
</reference>
<reference key="2">
    <citation type="journal article" date="2017" name="DNA Res.">
        <title>Function and evolution of a Lotus japonicus AP2/ERF family transcription factor that is required for development of infection threads.</title>
        <authorList>
            <person name="Yano K."/>
            <person name="Aoki S."/>
            <person name="Liu M."/>
            <person name="Umehara Y."/>
            <person name="Suganuma N."/>
            <person name="Iwasaki W."/>
            <person name="Sato S."/>
            <person name="Soyano T."/>
            <person name="Kouchi H."/>
            <person name="Kawaguchi M."/>
        </authorList>
    </citation>
    <scope>FUNCTION</scope>
    <scope>INDUCTION</scope>
    <scope>DISRUPTION PHENOTYPE</scope>
</reference>
<reference key="3">
    <citation type="journal article" date="2017" name="Mol. Plant Microbe Interact.">
        <title>The ethylene responsive factor required for nodulation 1 (ERN1) transcription factor is required for infection-thread formation in Lotus japonicus.</title>
        <authorList>
            <person name="Kawaharada Y."/>
            <person name="James E.K."/>
            <person name="Kelly S."/>
            <person name="Sandal N."/>
            <person name="Stougaard J."/>
        </authorList>
    </citation>
    <scope>FUNCTION</scope>
    <scope>DISRUPTION PHENOTYPE</scope>
</reference>
<protein>
    <recommendedName>
        <fullName evidence="7">Ethylene-responsive transcription factor ERN1</fullName>
        <shortName evidence="7">ERF transcription factor ERN1</shortName>
    </recommendedName>
    <alternativeName>
        <fullName evidence="6">Protein ERF REQUIRED FOR NODULATION 1</fullName>
        <shortName evidence="6">LjERN1</shortName>
    </alternativeName>
</protein>
<evidence type="ECO:0000255" key="1">
    <source>
        <dbReference type="PROSITE-ProRule" id="PRU00366"/>
    </source>
</evidence>
<evidence type="ECO:0000256" key="2">
    <source>
        <dbReference type="SAM" id="MobiDB-lite"/>
    </source>
</evidence>
<evidence type="ECO:0000269" key="3">
    <source>
    </source>
</evidence>
<evidence type="ECO:0000269" key="4">
    <source>
    </source>
</evidence>
<evidence type="ECO:0000269" key="5">
    <source>
    </source>
</evidence>
<evidence type="ECO:0000303" key="6">
    <source>
    </source>
</evidence>
<evidence type="ECO:0000305" key="7"/>
<proteinExistence type="evidence at transcript level"/>
<comment type="function">
    <text evidence="3 4 5">Transcription factor involved in the symbiotic nodule signaling pathway in response to rhizobial stimulation. Functions as a transcriptional regulator required for root infection by symbiotic rhizobia, infection thread (IT) formation, and nodule development. May coordinate these processes (PubMed:28028038, PubMed:28068194, PubMed:28503742). Functions downstream of the CCAMK-CYCLOPS complex (PubMed:28028038, PubMed:28503742). Probably not involved in arbuscular mycorrhizal (AM) symbiosis (PubMed:28068194).</text>
</comment>
<comment type="subcellular location">
    <subcellularLocation>
        <location evidence="1">Nucleus</location>
    </subcellularLocation>
</comment>
<comment type="induction">
    <text evidence="3 5">Induced in nodules 7 days after rhizobial inoculation.</text>
</comment>
<comment type="disruption phenotype">
    <text evidence="3 4 5">No visible phenotype under normal growth conditions, but roots of mutant plants are impaired in the interaction with rhizobia, formation of infection threads (ITs) and nodule development.</text>
</comment>
<comment type="similarity">
    <text evidence="7">Belongs to the AP2/ERF transcription factor family. ERF subfamily.</text>
</comment>
<gene>
    <name evidence="6" type="primary">ERN1</name>
</gene>
<sequence>MEIQFQQPNLQQHQKAGTKGGKFKGRNRNSNTNKFVGVRQRPSGRWVAEIKDTTQKIRMWLGTFETAEEAARAYDEAACLLRGSNTRTNFITHVSLDSPLASRIRNLLNNKKGNKKQEGVVDVGVDVDVPAPSASTTSTSSNTSNSDKNDHNSLSSGKVQNTMLFDDAYKPDLSNCKEDFQSCPPQSNFSWGFGPVFDRFPIAQILDMPKTDGMIDAASLELSEFERMKVERQISASLYAINGVHEYMETVQDSNETLWDLPPLCSLFC</sequence>